<evidence type="ECO:0000255" key="1">
    <source>
        <dbReference type="HAMAP-Rule" id="MF_01694"/>
    </source>
</evidence>
<evidence type="ECO:0000255" key="2">
    <source>
        <dbReference type="PROSITE-ProRule" id="PRU01266"/>
    </source>
</evidence>
<reference key="1">
    <citation type="journal article" date="2007" name="Photosyn. Res.">
        <title>Complete nucleotide sequence of the freshwater unicellular cyanobacterium Synechococcus elongatus PCC 6301 chromosome: gene content and organization.</title>
        <authorList>
            <person name="Sugita C."/>
            <person name="Ogata K."/>
            <person name="Shikata M."/>
            <person name="Jikuya H."/>
            <person name="Takano J."/>
            <person name="Furumichi M."/>
            <person name="Kanehisa M."/>
            <person name="Omata T."/>
            <person name="Sugiura M."/>
            <person name="Sugita M."/>
        </authorList>
    </citation>
    <scope>NUCLEOTIDE SEQUENCE [LARGE SCALE GENOMIC DNA]</scope>
    <source>
        <strain>ATCC 27144 / PCC 6301 / SAUG 1402/1</strain>
    </source>
</reference>
<organism>
    <name type="scientific">Synechococcus sp. (strain ATCC 27144 / PCC 6301 / SAUG 1402/1)</name>
    <name type="common">Anacystis nidulans</name>
    <dbReference type="NCBI Taxonomy" id="269084"/>
    <lineage>
        <taxon>Bacteria</taxon>
        <taxon>Bacillati</taxon>
        <taxon>Cyanobacteriota</taxon>
        <taxon>Cyanophyceae</taxon>
        <taxon>Synechococcales</taxon>
        <taxon>Synechococcaceae</taxon>
        <taxon>Synechococcus</taxon>
    </lineage>
</organism>
<protein>
    <recommendedName>
        <fullName evidence="1">Biotin synthase</fullName>
        <ecNumber evidence="1">2.8.1.6</ecNumber>
    </recommendedName>
</protein>
<proteinExistence type="inferred from homology"/>
<name>BIOB_SYNP6</name>
<dbReference type="EC" id="2.8.1.6" evidence="1"/>
<dbReference type="EMBL" id="AP008231">
    <property type="protein sequence ID" value="BAD79288.1"/>
    <property type="molecule type" value="Genomic_DNA"/>
</dbReference>
<dbReference type="RefSeq" id="WP_011243409.1">
    <property type="nucleotide sequence ID" value="NZ_CP085785.1"/>
</dbReference>
<dbReference type="SMR" id="Q5N332"/>
<dbReference type="GeneID" id="72429239"/>
<dbReference type="KEGG" id="syc:syc1098_d"/>
<dbReference type="eggNOG" id="COG0502">
    <property type="taxonomic scope" value="Bacteria"/>
</dbReference>
<dbReference type="UniPathway" id="UPA00078">
    <property type="reaction ID" value="UER00162"/>
</dbReference>
<dbReference type="Proteomes" id="UP000001175">
    <property type="component" value="Chromosome"/>
</dbReference>
<dbReference type="GO" id="GO:0051537">
    <property type="term" value="F:2 iron, 2 sulfur cluster binding"/>
    <property type="evidence" value="ECO:0007669"/>
    <property type="project" value="UniProtKB-KW"/>
</dbReference>
<dbReference type="GO" id="GO:0051539">
    <property type="term" value="F:4 iron, 4 sulfur cluster binding"/>
    <property type="evidence" value="ECO:0007669"/>
    <property type="project" value="UniProtKB-KW"/>
</dbReference>
<dbReference type="GO" id="GO:0004076">
    <property type="term" value="F:biotin synthase activity"/>
    <property type="evidence" value="ECO:0007669"/>
    <property type="project" value="UniProtKB-UniRule"/>
</dbReference>
<dbReference type="GO" id="GO:0005506">
    <property type="term" value="F:iron ion binding"/>
    <property type="evidence" value="ECO:0007669"/>
    <property type="project" value="UniProtKB-UniRule"/>
</dbReference>
<dbReference type="GO" id="GO:0009102">
    <property type="term" value="P:biotin biosynthetic process"/>
    <property type="evidence" value="ECO:0007669"/>
    <property type="project" value="UniProtKB-UniRule"/>
</dbReference>
<dbReference type="CDD" id="cd01335">
    <property type="entry name" value="Radical_SAM"/>
    <property type="match status" value="1"/>
</dbReference>
<dbReference type="Gene3D" id="3.20.20.70">
    <property type="entry name" value="Aldolase class I"/>
    <property type="match status" value="1"/>
</dbReference>
<dbReference type="HAMAP" id="MF_01694">
    <property type="entry name" value="BioB"/>
    <property type="match status" value="1"/>
</dbReference>
<dbReference type="InterPro" id="IPR013785">
    <property type="entry name" value="Aldolase_TIM"/>
</dbReference>
<dbReference type="InterPro" id="IPR010722">
    <property type="entry name" value="BATS_dom"/>
</dbReference>
<dbReference type="InterPro" id="IPR002684">
    <property type="entry name" value="Biotin_synth/BioAB"/>
</dbReference>
<dbReference type="InterPro" id="IPR024177">
    <property type="entry name" value="Biotin_synthase"/>
</dbReference>
<dbReference type="InterPro" id="IPR006638">
    <property type="entry name" value="Elp3/MiaA/NifB-like_rSAM"/>
</dbReference>
<dbReference type="InterPro" id="IPR007197">
    <property type="entry name" value="rSAM"/>
</dbReference>
<dbReference type="NCBIfam" id="TIGR00433">
    <property type="entry name" value="bioB"/>
    <property type="match status" value="1"/>
</dbReference>
<dbReference type="PANTHER" id="PTHR22976">
    <property type="entry name" value="BIOTIN SYNTHASE"/>
    <property type="match status" value="1"/>
</dbReference>
<dbReference type="PANTHER" id="PTHR22976:SF2">
    <property type="entry name" value="BIOTIN SYNTHASE, MITOCHONDRIAL"/>
    <property type="match status" value="1"/>
</dbReference>
<dbReference type="Pfam" id="PF06968">
    <property type="entry name" value="BATS"/>
    <property type="match status" value="1"/>
</dbReference>
<dbReference type="Pfam" id="PF04055">
    <property type="entry name" value="Radical_SAM"/>
    <property type="match status" value="1"/>
</dbReference>
<dbReference type="PIRSF" id="PIRSF001619">
    <property type="entry name" value="Biotin_synth"/>
    <property type="match status" value="1"/>
</dbReference>
<dbReference type="SFLD" id="SFLDF00272">
    <property type="entry name" value="biotin_synthase"/>
    <property type="match status" value="1"/>
</dbReference>
<dbReference type="SFLD" id="SFLDG01278">
    <property type="entry name" value="biotin_synthase_like"/>
    <property type="match status" value="1"/>
</dbReference>
<dbReference type="SMART" id="SM00876">
    <property type="entry name" value="BATS"/>
    <property type="match status" value="1"/>
</dbReference>
<dbReference type="SMART" id="SM00729">
    <property type="entry name" value="Elp3"/>
    <property type="match status" value="1"/>
</dbReference>
<dbReference type="SUPFAM" id="SSF102114">
    <property type="entry name" value="Radical SAM enzymes"/>
    <property type="match status" value="1"/>
</dbReference>
<dbReference type="PROSITE" id="PS51918">
    <property type="entry name" value="RADICAL_SAM"/>
    <property type="match status" value="1"/>
</dbReference>
<feature type="chain" id="PRO_0000381676" description="Biotin synthase">
    <location>
        <begin position="1"/>
        <end position="320"/>
    </location>
</feature>
<feature type="domain" description="Radical SAM core" evidence="2">
    <location>
        <begin position="39"/>
        <end position="267"/>
    </location>
</feature>
<feature type="binding site" evidence="1">
    <location>
        <position position="54"/>
    </location>
    <ligand>
        <name>[4Fe-4S] cluster</name>
        <dbReference type="ChEBI" id="CHEBI:49883"/>
        <note>4Fe-4S-S-AdoMet</note>
    </ligand>
</feature>
<feature type="binding site" evidence="1">
    <location>
        <position position="58"/>
    </location>
    <ligand>
        <name>[4Fe-4S] cluster</name>
        <dbReference type="ChEBI" id="CHEBI:49883"/>
        <note>4Fe-4S-S-AdoMet</note>
    </ligand>
</feature>
<feature type="binding site" evidence="1">
    <location>
        <position position="61"/>
    </location>
    <ligand>
        <name>[4Fe-4S] cluster</name>
        <dbReference type="ChEBI" id="CHEBI:49883"/>
        <note>4Fe-4S-S-AdoMet</note>
    </ligand>
</feature>
<feature type="binding site" evidence="1">
    <location>
        <position position="98"/>
    </location>
    <ligand>
        <name>[2Fe-2S] cluster</name>
        <dbReference type="ChEBI" id="CHEBI:190135"/>
    </ligand>
</feature>
<feature type="binding site" evidence="1">
    <location>
        <position position="130"/>
    </location>
    <ligand>
        <name>[2Fe-2S] cluster</name>
        <dbReference type="ChEBI" id="CHEBI:190135"/>
    </ligand>
</feature>
<feature type="binding site" evidence="1">
    <location>
        <position position="190"/>
    </location>
    <ligand>
        <name>[2Fe-2S] cluster</name>
        <dbReference type="ChEBI" id="CHEBI:190135"/>
    </ligand>
</feature>
<feature type="binding site" evidence="1">
    <location>
        <position position="262"/>
    </location>
    <ligand>
        <name>[2Fe-2S] cluster</name>
        <dbReference type="ChEBI" id="CHEBI:190135"/>
    </ligand>
</feature>
<comment type="function">
    <text evidence="1">Catalyzes the conversion of dethiobiotin (DTB) to biotin by the insertion of a sulfur atom into dethiobiotin via a radical-based mechanism.</text>
</comment>
<comment type="catalytic activity">
    <reaction evidence="1">
        <text>(4R,5S)-dethiobiotin + (sulfur carrier)-SH + 2 reduced [2Fe-2S]-[ferredoxin] + 2 S-adenosyl-L-methionine = (sulfur carrier)-H + biotin + 2 5'-deoxyadenosine + 2 L-methionine + 2 oxidized [2Fe-2S]-[ferredoxin]</text>
        <dbReference type="Rhea" id="RHEA:22060"/>
        <dbReference type="Rhea" id="RHEA-COMP:10000"/>
        <dbReference type="Rhea" id="RHEA-COMP:10001"/>
        <dbReference type="Rhea" id="RHEA-COMP:14737"/>
        <dbReference type="Rhea" id="RHEA-COMP:14739"/>
        <dbReference type="ChEBI" id="CHEBI:17319"/>
        <dbReference type="ChEBI" id="CHEBI:29917"/>
        <dbReference type="ChEBI" id="CHEBI:33737"/>
        <dbReference type="ChEBI" id="CHEBI:33738"/>
        <dbReference type="ChEBI" id="CHEBI:57586"/>
        <dbReference type="ChEBI" id="CHEBI:57844"/>
        <dbReference type="ChEBI" id="CHEBI:59789"/>
        <dbReference type="ChEBI" id="CHEBI:64428"/>
        <dbReference type="ChEBI" id="CHEBI:149473"/>
        <dbReference type="EC" id="2.8.1.6"/>
    </reaction>
</comment>
<comment type="cofactor">
    <cofactor evidence="1">
        <name>[4Fe-4S] cluster</name>
        <dbReference type="ChEBI" id="CHEBI:49883"/>
    </cofactor>
    <text evidence="1">Binds 1 [4Fe-4S] cluster. The cluster is coordinated with 3 cysteines and an exchangeable S-adenosyl-L-methionine.</text>
</comment>
<comment type="cofactor">
    <cofactor evidence="1">
        <name>[2Fe-2S] cluster</name>
        <dbReference type="ChEBI" id="CHEBI:190135"/>
    </cofactor>
    <text evidence="1">Binds 1 [2Fe-2S] cluster. The cluster is coordinated with 3 cysteines and 1 arginine.</text>
</comment>
<comment type="pathway">
    <text evidence="1">Cofactor biosynthesis; biotin biosynthesis; biotin from 7,8-diaminononanoate: step 2/2.</text>
</comment>
<comment type="subunit">
    <text evidence="1">Homodimer.</text>
</comment>
<comment type="similarity">
    <text evidence="1">Belongs to the radical SAM superfamily. Biotin synthase family.</text>
</comment>
<sequence>MEAIRHDWTLEEIEDLLNTPLLELVHRAQTVHRDYQPANAIQLATLLSVKTGGCSENCAYCPQSAHYNTEVDPQSTLPIETVLEQAERAKAAGASRFCMGWAWREIRDGAQFDAMLEMVQGVRQLGLEACVTAGMLSDRQAERLAEAGLTAYNHNLDTSPEFYGEIISTRTYADRLATLERVRQAGISVCCGGIIGMGEGQRDRAGLLQVLATLNPHPESVPINALVPVEGTPLGDRDRLDPLDLVRMCAVARILMPKARVRLSAGRTALSREAQVLCFLAGANSIFYGDTLLTTANPVCEADRQLLADIGAEALEVVTA</sequence>
<gene>
    <name evidence="1" type="primary">bioB</name>
    <name type="ordered locus">syc1098_d</name>
</gene>
<accession>Q5N332</accession>
<keyword id="KW-0001">2Fe-2S</keyword>
<keyword id="KW-0004">4Fe-4S</keyword>
<keyword id="KW-0093">Biotin biosynthesis</keyword>
<keyword id="KW-0408">Iron</keyword>
<keyword id="KW-0411">Iron-sulfur</keyword>
<keyword id="KW-0479">Metal-binding</keyword>
<keyword id="KW-0949">S-adenosyl-L-methionine</keyword>
<keyword id="KW-0808">Transferase</keyword>